<comment type="function">
    <text evidence="2 4">Ribosome-binding protein that acts as a regulator of mRNA translation by promoting ribosome inactivation (By similarity). Binds RNA (PubMed:11905967).</text>
</comment>
<comment type="subcellular location">
    <subcellularLocation>
        <location evidence="4">Nucleus</location>
    </subcellularLocation>
    <subcellularLocation>
        <location evidence="1">Cytoplasm</location>
        <location evidence="1">Perinuclear region</location>
    </subcellularLocation>
</comment>
<comment type="tissue specificity">
    <text evidence="4">Expressed in seedlings but not in roots.</text>
</comment>
<comment type="induction">
    <text evidence="4">Stronger levels in light.</text>
</comment>
<comment type="similarity">
    <text evidence="6">Belongs to the SERBP1-HABP4 family.</text>
</comment>
<dbReference type="EMBL" id="AF110226">
    <property type="protein sequence ID" value="AAF14242.1"/>
    <property type="molecule type" value="mRNA"/>
</dbReference>
<dbReference type="SMR" id="Q9SQ56"/>
<dbReference type="STRING" id="4097.Q9SQ56"/>
<dbReference type="PaxDb" id="4097-Q9SQ56"/>
<dbReference type="Proteomes" id="UP000084051">
    <property type="component" value="Unplaced"/>
</dbReference>
<dbReference type="GO" id="GO:0005737">
    <property type="term" value="C:cytoplasm"/>
    <property type="evidence" value="ECO:0000318"/>
    <property type="project" value="GO_Central"/>
</dbReference>
<dbReference type="GO" id="GO:0005634">
    <property type="term" value="C:nucleus"/>
    <property type="evidence" value="ECO:0000314"/>
    <property type="project" value="UniProtKB"/>
</dbReference>
<dbReference type="GO" id="GO:0048471">
    <property type="term" value="C:perinuclear region of cytoplasm"/>
    <property type="evidence" value="ECO:0007669"/>
    <property type="project" value="UniProtKB-SubCell"/>
</dbReference>
<dbReference type="GO" id="GO:0003723">
    <property type="term" value="F:RNA binding"/>
    <property type="evidence" value="ECO:0000314"/>
    <property type="project" value="UniProtKB"/>
</dbReference>
<dbReference type="GO" id="GO:0006417">
    <property type="term" value="P:regulation of translation"/>
    <property type="evidence" value="ECO:0007669"/>
    <property type="project" value="UniProtKB-KW"/>
</dbReference>
<dbReference type="GO" id="GO:0009416">
    <property type="term" value="P:response to light stimulus"/>
    <property type="evidence" value="ECO:0000270"/>
    <property type="project" value="UniProtKB"/>
</dbReference>
<dbReference type="Gene3D" id="6.10.140.1040">
    <property type="match status" value="1"/>
</dbReference>
<dbReference type="InterPro" id="IPR039764">
    <property type="entry name" value="HABP4/SERBP1-like"/>
</dbReference>
<dbReference type="InterPro" id="IPR006861">
    <property type="entry name" value="HABP4_PAIRBP1-bd"/>
</dbReference>
<dbReference type="PANTHER" id="PTHR12299">
    <property type="entry name" value="HYALURONIC ACID-BINDING PROTEIN 4"/>
    <property type="match status" value="1"/>
</dbReference>
<dbReference type="PANTHER" id="PTHR12299:SF57">
    <property type="entry name" value="PLASMINOGEN ACTIVATOR INHIBITOR 1 RNA-BINDING PROTEIN-LIKE ISOFORM X1"/>
    <property type="match status" value="1"/>
</dbReference>
<dbReference type="Pfam" id="PF04774">
    <property type="entry name" value="HABP4_PAI-RBP1"/>
    <property type="match status" value="1"/>
</dbReference>
<dbReference type="SMART" id="SM01233">
    <property type="entry name" value="HABP4_PAI-RBP1"/>
    <property type="match status" value="1"/>
</dbReference>
<name>RGGA_TOBAC</name>
<protein>
    <recommendedName>
        <fullName evidence="5">RGG repeats nuclear RNA binding protein A</fullName>
    </recommendedName>
</protein>
<accession>Q9SQ56</accession>
<sequence>RGGGRGGPRGGGRGRGPGRGRGFNQESADDENAFGSNNGFSGRYRVQEDGESGKLSERRGGYGGPRGGFHGGRRGGFNNGDAAEGEGERPRRVFDRRSGTGRGNEYIKREGSGRGNWGTPADDIAQETEVPVNDGEKIVEAEKEAGQEEAEDTNKDSTAAEPEEKEPEEKEMTLEEYEKLMEEKRKALLALKPEERKVNLDKELESMQLLSNKKNDDEIFIKLGSEKEKRKEAVEKARKTQSINEFLKPAEGENYSRRGGRGRGPGRGRGGFGGGVGGNKSFSAPSIEDVGQFPSLVAK</sequence>
<feature type="chain" id="PRO_0000438319" description="RGG repeats nuclear RNA binding protein A">
    <location>
        <begin position="1" status="less than"/>
        <end position="299"/>
    </location>
</feature>
<feature type="region of interest" description="Disordered" evidence="3">
    <location>
        <begin position="1"/>
        <end position="173"/>
    </location>
</feature>
<feature type="region of interest" description="Disordered" evidence="3">
    <location>
        <begin position="232"/>
        <end position="299"/>
    </location>
</feature>
<feature type="short sequence motif" description="Arginine-rich RNA-binding motif E-R-P-R-R-X-[F/Y]-[E/D]-R-R-S" evidence="5">
    <location>
        <begin position="88"/>
        <end position="98"/>
    </location>
</feature>
<feature type="compositionally biased region" description="Gly residues" evidence="3">
    <location>
        <begin position="1"/>
        <end position="21"/>
    </location>
</feature>
<feature type="compositionally biased region" description="Basic and acidic residues" evidence="3">
    <location>
        <begin position="45"/>
        <end position="60"/>
    </location>
</feature>
<feature type="compositionally biased region" description="Gly residues" evidence="3">
    <location>
        <begin position="61"/>
        <end position="78"/>
    </location>
</feature>
<feature type="compositionally biased region" description="Basic and acidic residues" evidence="3">
    <location>
        <begin position="86"/>
        <end position="98"/>
    </location>
</feature>
<feature type="compositionally biased region" description="Basic and acidic residues" evidence="3">
    <location>
        <begin position="134"/>
        <end position="146"/>
    </location>
</feature>
<feature type="compositionally biased region" description="Gly residues" evidence="3">
    <location>
        <begin position="267"/>
        <end position="278"/>
    </location>
</feature>
<feature type="non-terminal residue" evidence="7">
    <location>
        <position position="1"/>
    </location>
</feature>
<proteinExistence type="evidence at transcript level"/>
<evidence type="ECO:0000250" key="1">
    <source>
        <dbReference type="UniProtKB" id="O23523"/>
    </source>
</evidence>
<evidence type="ECO:0000250" key="2">
    <source>
        <dbReference type="UniProtKB" id="Q5XJA5"/>
    </source>
</evidence>
<evidence type="ECO:0000256" key="3">
    <source>
        <dbReference type="SAM" id="MobiDB-lite"/>
    </source>
</evidence>
<evidence type="ECO:0000269" key="4">
    <source>
    </source>
</evidence>
<evidence type="ECO:0000303" key="5">
    <source>
    </source>
</evidence>
<evidence type="ECO:0000305" key="6"/>
<evidence type="ECO:0000312" key="7">
    <source>
        <dbReference type="EMBL" id="AAF14242.1"/>
    </source>
</evidence>
<reference key="1">
    <citation type="journal article" date="2002" name="Plant Mol. Biol.">
        <title>Molecular characterization of nucleus-localized RNA-binding proteins from higher plants.</title>
        <authorList>
            <person name="Landsberger M."/>
            <person name="Lorkovic Z.J."/>
            <person name="Oelmuller R."/>
        </authorList>
    </citation>
    <scope>NUCLEOTIDE SEQUENCE [MRNA]</scope>
    <scope>FUNCTION</scope>
    <scope>INDUCTION BY LIGHT</scope>
    <scope>TISSUE SPECIFICITY</scope>
    <scope>SUBCELLULAR LOCATION</scope>
    <source>
        <tissue>Leaf</tissue>
    </source>
</reference>
<keyword id="KW-0963">Cytoplasm</keyword>
<keyword id="KW-0539">Nucleus</keyword>
<keyword id="KW-1185">Reference proteome</keyword>
<keyword id="KW-0694">RNA-binding</keyword>
<keyword id="KW-0810">Translation regulation</keyword>
<gene>
    <name evidence="5" type="primary">RggA</name>
</gene>
<organism>
    <name type="scientific">Nicotiana tabacum</name>
    <name type="common">Common tobacco</name>
    <dbReference type="NCBI Taxonomy" id="4097"/>
    <lineage>
        <taxon>Eukaryota</taxon>
        <taxon>Viridiplantae</taxon>
        <taxon>Streptophyta</taxon>
        <taxon>Embryophyta</taxon>
        <taxon>Tracheophyta</taxon>
        <taxon>Spermatophyta</taxon>
        <taxon>Magnoliopsida</taxon>
        <taxon>eudicotyledons</taxon>
        <taxon>Gunneridae</taxon>
        <taxon>Pentapetalae</taxon>
        <taxon>asterids</taxon>
        <taxon>lamiids</taxon>
        <taxon>Solanales</taxon>
        <taxon>Solanaceae</taxon>
        <taxon>Nicotianoideae</taxon>
        <taxon>Nicotianeae</taxon>
        <taxon>Nicotiana</taxon>
    </lineage>
</organism>